<accession>A7F4S1</accession>
<comment type="function">
    <text evidence="1">May be involved in vacuolar sorting and osmoregulation.</text>
</comment>
<comment type="cofactor">
    <cofactor evidence="2">
        <name>Zn(2+)</name>
        <dbReference type="ChEBI" id="CHEBI:29105"/>
    </cofactor>
    <text evidence="2">Binds 2 Zn(2+) ions per subunit.</text>
</comment>
<comment type="subcellular location">
    <subcellularLocation>
        <location evidence="1">Vacuole membrane</location>
        <topology evidence="3">Multi-pass membrane protein</topology>
    </subcellularLocation>
</comment>
<comment type="similarity">
    <text evidence="6">Belongs to the peptidase M28 family.</text>
</comment>
<organism>
    <name type="scientific">Sclerotinia sclerotiorum (strain ATCC 18683 / 1980 / Ss-1)</name>
    <name type="common">White mold</name>
    <name type="synonym">Whetzelinia sclerotiorum</name>
    <dbReference type="NCBI Taxonomy" id="665079"/>
    <lineage>
        <taxon>Eukaryota</taxon>
        <taxon>Fungi</taxon>
        <taxon>Dikarya</taxon>
        <taxon>Ascomycota</taxon>
        <taxon>Pezizomycotina</taxon>
        <taxon>Leotiomycetes</taxon>
        <taxon>Helotiales</taxon>
        <taxon>Sclerotiniaceae</taxon>
        <taxon>Sclerotinia</taxon>
    </lineage>
</organism>
<dbReference type="EC" id="3.4.-.-" evidence="6"/>
<dbReference type="EMBL" id="CH476641">
    <property type="protein sequence ID" value="EDN97742.1"/>
    <property type="molecule type" value="Genomic_DNA"/>
</dbReference>
<dbReference type="RefSeq" id="XP_001586609.1">
    <property type="nucleotide sequence ID" value="XM_001586559.1"/>
</dbReference>
<dbReference type="SMR" id="A7F4S1"/>
<dbReference type="FunCoup" id="A7F4S1">
    <property type="interactions" value="4"/>
</dbReference>
<dbReference type="STRING" id="665079.A7F4S1"/>
<dbReference type="EnsemblFungi" id="EDN97742">
    <property type="protein sequence ID" value="EDN97742"/>
    <property type="gene ID" value="SS1G_12596"/>
</dbReference>
<dbReference type="GeneID" id="5482541"/>
<dbReference type="KEGG" id="ssl:SS1G_12596"/>
<dbReference type="eggNOG" id="KOG2194">
    <property type="taxonomic scope" value="Eukaryota"/>
</dbReference>
<dbReference type="HOGENOM" id="CLU_006412_1_0_1"/>
<dbReference type="InParanoid" id="A7F4S1"/>
<dbReference type="OMA" id="FCHTFVN"/>
<dbReference type="Proteomes" id="UP000001312">
    <property type="component" value="Unassembled WGS sequence"/>
</dbReference>
<dbReference type="GO" id="GO:0005774">
    <property type="term" value="C:vacuolar membrane"/>
    <property type="evidence" value="ECO:0007669"/>
    <property type="project" value="UniProtKB-SubCell"/>
</dbReference>
<dbReference type="GO" id="GO:0046872">
    <property type="term" value="F:metal ion binding"/>
    <property type="evidence" value="ECO:0007669"/>
    <property type="project" value="UniProtKB-KW"/>
</dbReference>
<dbReference type="GO" id="GO:0008235">
    <property type="term" value="F:metalloexopeptidase activity"/>
    <property type="evidence" value="ECO:0007669"/>
    <property type="project" value="InterPro"/>
</dbReference>
<dbReference type="GO" id="GO:0006508">
    <property type="term" value="P:proteolysis"/>
    <property type="evidence" value="ECO:0000318"/>
    <property type="project" value="GO_Central"/>
</dbReference>
<dbReference type="CDD" id="cd03875">
    <property type="entry name" value="M28_Fxna_like"/>
    <property type="match status" value="1"/>
</dbReference>
<dbReference type="Gene3D" id="3.40.630.10">
    <property type="entry name" value="Zn peptidases"/>
    <property type="match status" value="1"/>
</dbReference>
<dbReference type="InterPro" id="IPR048024">
    <property type="entry name" value="Fxna-like_M28_dom"/>
</dbReference>
<dbReference type="InterPro" id="IPR045175">
    <property type="entry name" value="M28_fam"/>
</dbReference>
<dbReference type="InterPro" id="IPR007484">
    <property type="entry name" value="Peptidase_M28"/>
</dbReference>
<dbReference type="InterPro" id="IPR053975">
    <property type="entry name" value="PFF1_C"/>
</dbReference>
<dbReference type="InterPro" id="IPR053976">
    <property type="entry name" value="PFF1_TM"/>
</dbReference>
<dbReference type="PANTHER" id="PTHR12147">
    <property type="entry name" value="METALLOPEPTIDASE M28 FAMILY MEMBER"/>
    <property type="match status" value="1"/>
</dbReference>
<dbReference type="PANTHER" id="PTHR12147:SF58">
    <property type="entry name" value="VACUOLAR MEMBRANE PROTEASE"/>
    <property type="match status" value="1"/>
</dbReference>
<dbReference type="Pfam" id="PF04389">
    <property type="entry name" value="Peptidase_M28"/>
    <property type="match status" value="1"/>
</dbReference>
<dbReference type="Pfam" id="PF22250">
    <property type="entry name" value="PFF1_C"/>
    <property type="match status" value="1"/>
</dbReference>
<dbReference type="Pfam" id="PF22251">
    <property type="entry name" value="PFF1_TM"/>
    <property type="match status" value="1"/>
</dbReference>
<dbReference type="SUPFAM" id="SSF53187">
    <property type="entry name" value="Zn-dependent exopeptidases"/>
    <property type="match status" value="1"/>
</dbReference>
<evidence type="ECO:0000250" key="1">
    <source>
        <dbReference type="UniProtKB" id="P38244"/>
    </source>
</evidence>
<evidence type="ECO:0000250" key="2">
    <source>
        <dbReference type="UniProtKB" id="P80561"/>
    </source>
</evidence>
<evidence type="ECO:0000255" key="3"/>
<evidence type="ECO:0000255" key="4">
    <source>
        <dbReference type="PROSITE-ProRule" id="PRU00498"/>
    </source>
</evidence>
<evidence type="ECO:0000256" key="5">
    <source>
        <dbReference type="SAM" id="MobiDB-lite"/>
    </source>
</evidence>
<evidence type="ECO:0000305" key="6"/>
<protein>
    <recommendedName>
        <fullName evidence="1">Vacuolar membrane protease</fullName>
        <ecNumber evidence="6">3.4.-.-</ecNumber>
    </recommendedName>
    <alternativeName>
        <fullName evidence="1">FXNA-related family protease 1</fullName>
    </alternativeName>
</protein>
<keyword id="KW-0325">Glycoprotein</keyword>
<keyword id="KW-0378">Hydrolase</keyword>
<keyword id="KW-0472">Membrane</keyword>
<keyword id="KW-0479">Metal-binding</keyword>
<keyword id="KW-0482">Metalloprotease</keyword>
<keyword id="KW-0645">Protease</keyword>
<keyword id="KW-1185">Reference proteome</keyword>
<keyword id="KW-0812">Transmembrane</keyword>
<keyword id="KW-1133">Transmembrane helix</keyword>
<keyword id="KW-0926">Vacuole</keyword>
<keyword id="KW-0862">Zinc</keyword>
<feature type="chain" id="PRO_0000411742" description="Vacuolar membrane protease">
    <location>
        <begin position="1"/>
        <end position="1076"/>
    </location>
</feature>
<feature type="topological domain" description="Cytoplasmic" evidence="1">
    <location>
        <begin position="1"/>
        <end position="11"/>
    </location>
</feature>
<feature type="transmembrane region" description="Helical; Name=1" evidence="3">
    <location>
        <begin position="12"/>
        <end position="32"/>
    </location>
</feature>
<feature type="topological domain" description="Vacuolar" evidence="1">
    <location>
        <begin position="33"/>
        <end position="437"/>
    </location>
</feature>
<feature type="transmembrane region" description="Helical; Name=2" evidence="3">
    <location>
        <begin position="438"/>
        <end position="458"/>
    </location>
</feature>
<feature type="topological domain" description="Cytoplasmic" evidence="1">
    <location>
        <begin position="459"/>
        <end position="491"/>
    </location>
</feature>
<feature type="transmembrane region" description="Helical; Name=3" evidence="3">
    <location>
        <begin position="492"/>
        <end position="512"/>
    </location>
</feature>
<feature type="topological domain" description="Vacuolar" evidence="1">
    <location>
        <begin position="513"/>
        <end position="525"/>
    </location>
</feature>
<feature type="transmembrane region" description="Helical; Name=4" evidence="3">
    <location>
        <begin position="526"/>
        <end position="546"/>
    </location>
</feature>
<feature type="topological domain" description="Cytoplasmic" evidence="1">
    <location>
        <begin position="547"/>
        <end position="556"/>
    </location>
</feature>
<feature type="transmembrane region" description="Helical; Name=5" evidence="3">
    <location>
        <begin position="557"/>
        <end position="577"/>
    </location>
</feature>
<feature type="topological domain" description="Vacuolar" evidence="1">
    <location>
        <begin position="578"/>
        <end position="584"/>
    </location>
</feature>
<feature type="transmembrane region" description="Helical; Name=6" evidence="3">
    <location>
        <begin position="585"/>
        <end position="605"/>
    </location>
</feature>
<feature type="topological domain" description="Cytoplasmic" evidence="1">
    <location>
        <begin position="606"/>
        <end position="738"/>
    </location>
</feature>
<feature type="transmembrane region" description="Helical; Name=7" evidence="3">
    <location>
        <begin position="739"/>
        <end position="759"/>
    </location>
</feature>
<feature type="topological domain" description="Vacuolar" evidence="1">
    <location>
        <begin position="760"/>
        <end position="771"/>
    </location>
</feature>
<feature type="transmembrane region" description="Helical; Name=8" evidence="3">
    <location>
        <begin position="772"/>
        <end position="792"/>
    </location>
</feature>
<feature type="topological domain" description="Cytoplasmic" evidence="1">
    <location>
        <begin position="793"/>
        <end position="799"/>
    </location>
</feature>
<feature type="transmembrane region" description="Helical; Name=9" evidence="3">
    <location>
        <begin position="800"/>
        <end position="820"/>
    </location>
</feature>
<feature type="topological domain" description="Vacuolar" evidence="1">
    <location>
        <begin position="821"/>
        <end position="1076"/>
    </location>
</feature>
<feature type="region of interest" description="Disordered" evidence="5">
    <location>
        <begin position="619"/>
        <end position="662"/>
    </location>
</feature>
<feature type="region of interest" description="Disordered" evidence="5">
    <location>
        <begin position="701"/>
        <end position="720"/>
    </location>
</feature>
<feature type="compositionally biased region" description="Basic and acidic residues" evidence="5">
    <location>
        <begin position="621"/>
        <end position="632"/>
    </location>
</feature>
<feature type="compositionally biased region" description="Acidic residues" evidence="5">
    <location>
        <begin position="647"/>
        <end position="660"/>
    </location>
</feature>
<feature type="active site" description="Proton acceptor" evidence="2">
    <location>
        <position position="266"/>
    </location>
</feature>
<feature type="binding site" evidence="2">
    <location>
        <position position="220"/>
    </location>
    <ligand>
        <name>Zn(2+)</name>
        <dbReference type="ChEBI" id="CHEBI:29105"/>
        <label>1</label>
        <note>catalytic</note>
    </ligand>
</feature>
<feature type="binding site" evidence="2">
    <location>
        <position position="232"/>
    </location>
    <ligand>
        <name>Zn(2+)</name>
        <dbReference type="ChEBI" id="CHEBI:29105"/>
        <label>1</label>
        <note>catalytic</note>
    </ligand>
</feature>
<feature type="binding site" evidence="2">
    <location>
        <position position="232"/>
    </location>
    <ligand>
        <name>Zn(2+)</name>
        <dbReference type="ChEBI" id="CHEBI:29105"/>
        <label>2</label>
        <note>catalytic</note>
    </ligand>
</feature>
<feature type="binding site" evidence="2">
    <location>
        <position position="267"/>
    </location>
    <ligand>
        <name>Zn(2+)</name>
        <dbReference type="ChEBI" id="CHEBI:29105"/>
        <label>2</label>
        <note>catalytic</note>
    </ligand>
</feature>
<feature type="binding site" evidence="2">
    <location>
        <position position="292"/>
    </location>
    <ligand>
        <name>Zn(2+)</name>
        <dbReference type="ChEBI" id="CHEBI:29105"/>
        <label>1</label>
        <note>catalytic</note>
    </ligand>
</feature>
<feature type="binding site" evidence="2">
    <location>
        <position position="364"/>
    </location>
    <ligand>
        <name>Zn(2+)</name>
        <dbReference type="ChEBI" id="CHEBI:29105"/>
        <label>2</label>
        <note>catalytic</note>
    </ligand>
</feature>
<feature type="site" description="Transition state stabilizer" evidence="2">
    <location>
        <position position="363"/>
    </location>
</feature>
<feature type="glycosylation site" description="N-linked (GlcNAc...) asparagine" evidence="4">
    <location>
        <position position="50"/>
    </location>
</feature>
<feature type="glycosylation site" description="N-linked (GlcNAc...) asparagine" evidence="4">
    <location>
        <position position="99"/>
    </location>
</feature>
<feature type="glycosylation site" description="N-linked (GlcNAc...) asparagine" evidence="4">
    <location>
        <position position="156"/>
    </location>
</feature>
<feature type="glycosylation site" description="N-linked (GlcNAc...) asparagine" evidence="4">
    <location>
        <position position="912"/>
    </location>
</feature>
<reference key="1">
    <citation type="journal article" date="2011" name="PLoS Genet.">
        <title>Genomic analysis of the necrotrophic fungal pathogens Sclerotinia sclerotiorum and Botrytis cinerea.</title>
        <authorList>
            <person name="Amselem J."/>
            <person name="Cuomo C.A."/>
            <person name="van Kan J.A.L."/>
            <person name="Viaud M."/>
            <person name="Benito E.P."/>
            <person name="Couloux A."/>
            <person name="Coutinho P.M."/>
            <person name="de Vries R.P."/>
            <person name="Dyer P.S."/>
            <person name="Fillinger S."/>
            <person name="Fournier E."/>
            <person name="Gout L."/>
            <person name="Hahn M."/>
            <person name="Kohn L."/>
            <person name="Lapalu N."/>
            <person name="Plummer K.M."/>
            <person name="Pradier J.-M."/>
            <person name="Quevillon E."/>
            <person name="Sharon A."/>
            <person name="Simon A."/>
            <person name="ten Have A."/>
            <person name="Tudzynski B."/>
            <person name="Tudzynski P."/>
            <person name="Wincker P."/>
            <person name="Andrew M."/>
            <person name="Anthouard V."/>
            <person name="Beever R.E."/>
            <person name="Beffa R."/>
            <person name="Benoit I."/>
            <person name="Bouzid O."/>
            <person name="Brault B."/>
            <person name="Chen Z."/>
            <person name="Choquer M."/>
            <person name="Collemare J."/>
            <person name="Cotton P."/>
            <person name="Danchin E.G."/>
            <person name="Da Silva C."/>
            <person name="Gautier A."/>
            <person name="Giraud C."/>
            <person name="Giraud T."/>
            <person name="Gonzalez C."/>
            <person name="Grossetete S."/>
            <person name="Gueldener U."/>
            <person name="Henrissat B."/>
            <person name="Howlett B.J."/>
            <person name="Kodira C."/>
            <person name="Kretschmer M."/>
            <person name="Lappartient A."/>
            <person name="Leroch M."/>
            <person name="Levis C."/>
            <person name="Mauceli E."/>
            <person name="Neuveglise C."/>
            <person name="Oeser B."/>
            <person name="Pearson M."/>
            <person name="Poulain J."/>
            <person name="Poussereau N."/>
            <person name="Quesneville H."/>
            <person name="Rascle C."/>
            <person name="Schumacher J."/>
            <person name="Segurens B."/>
            <person name="Sexton A."/>
            <person name="Silva E."/>
            <person name="Sirven C."/>
            <person name="Soanes D.M."/>
            <person name="Talbot N.J."/>
            <person name="Templeton M."/>
            <person name="Yandava C."/>
            <person name="Yarden O."/>
            <person name="Zeng Q."/>
            <person name="Rollins J.A."/>
            <person name="Lebrun M.-H."/>
            <person name="Dickman M."/>
        </authorList>
    </citation>
    <scope>NUCLEOTIDE SEQUENCE [LARGE SCALE GENOMIC DNA]</scope>
    <source>
        <strain>ATCC 18683 / 1980 / Ss-1</strain>
    </source>
</reference>
<sequence>MKCYNPSAFVPMAVTLVTVVIYLGVFIPLLIIHETVPSAPDDPTLYNGLNLTEAWLDLQSLSDGYHPFNSRKNDDVRNWLLKRIDEILDHNQIQYTTENETADTSDVQLESDFDKDVPESMSGPNNFNDDSVEYHEDLRTRKVSPAVTVFNDLRSNYSSNALTSIGVKGRRLGISTYFEGNNIICYVRGNDDEEGEWWKTGSVNSKGKMHGRGGVMVNAHFDSVSTGFGATDDGVGVVTALQLIRYFTTPENRPQKGFVALFNNGEEDGLYGAKAFLSHPMAKFVHTFLNLEGAGAGGRATLFRSTDTEVTRAYAHAKHPFGTVVSSDGFSSGFVRSETDYVVFRAEGYRGLDVAFWQPRSQYHTDQDDAKHTSIDSLWHMLSASVATTRSLTRDTSNTFVGPRSDDKIGKVSNGKGSDGVWFDIFGTVFAVFRLRTLFAWSLTLLIASPLILFAVSYLLNRQEKFYFFAGSIKSKNPEDEPISLGGWRGAFRFPITLFITSAITFACASLINKINPMIIYSSPYAVWSMSATLFFSVFWFIMAGCNFVRPSALQRGYAFMWMFVFGWILLVVATVYEDRFKISGGYLFVFYEAAIFLATLIAICEQFALPRKSTYIEDSQNDHSDNQDHHHQAVMGTDGANGADEPNADDEAAEEDQEETVNATAFPHETTPLIGGGQPSHRASVSTSFANRYRQVVPESYDGPADHDDKKGHKKHPYGGEQEWSAKLPIWTWLVQYLLVGPFILVILGQVGLFLVAALHQTGTDGSPLFLPYLIVAIFSILLLLPVTPFIHRLTHHMPTFFFLVFIGTLIYNLVAFPFSPNNRYKAYFQQTVDLDTGVNRVTLVGIEQYIRNIITNIPSAAGQSINCEANPRIRSGLSFCSYEGIPPQVVDNVVEGVPPEKGYSDWLSFNVSRVPNENKATFHISGVETRACILRFDDPFSEFKVHGGAKSEERWDDVPDSGSDQIKLWHRDWNKEWVVDVEWAVGEDMKPGDEGRSGRVVCLWSDANKRGVIPALDEAQRFSPQWTSVVKLMDGLVEGSKRRVGELVRVGGWKKGRRDDFSLALGLAFLLAYV</sequence>
<proteinExistence type="inferred from homology"/>
<name>PFF1_SCLS1</name>
<gene>
    <name type="ORF">SS1G_12596</name>
</gene>